<evidence type="ECO:0000250" key="1">
    <source>
        <dbReference type="UniProtKB" id="Q86TU7"/>
    </source>
</evidence>
<evidence type="ECO:0000250" key="2">
    <source>
        <dbReference type="UniProtKB" id="Q91WC0"/>
    </source>
</evidence>
<evidence type="ECO:0000255" key="3">
    <source>
        <dbReference type="PROSITE-ProRule" id="PRU00190"/>
    </source>
</evidence>
<evidence type="ECO:0000255" key="4">
    <source>
        <dbReference type="PROSITE-ProRule" id="PRU00898"/>
    </source>
</evidence>
<evidence type="ECO:0000256" key="5">
    <source>
        <dbReference type="SAM" id="MobiDB-lite"/>
    </source>
</evidence>
<evidence type="ECO:0000305" key="6"/>
<keyword id="KW-0009">Actin-binding</keyword>
<keyword id="KW-0963">Cytoplasm</keyword>
<keyword id="KW-0489">Methyltransferase</keyword>
<keyword id="KW-0539">Nucleus</keyword>
<keyword id="KW-0597">Phosphoprotein</keyword>
<keyword id="KW-1185">Reference proteome</keyword>
<keyword id="KW-0949">S-adenosyl-L-methionine</keyword>
<keyword id="KW-0808">Transferase</keyword>
<keyword id="KW-0832">Ubl conjugation</keyword>
<reference key="1">
    <citation type="journal article" date="2005" name="Nature">
        <title>Genome sequence, comparative analysis and haplotype structure of the domestic dog.</title>
        <authorList>
            <person name="Lindblad-Toh K."/>
            <person name="Wade C.M."/>
            <person name="Mikkelsen T.S."/>
            <person name="Karlsson E.K."/>
            <person name="Jaffe D.B."/>
            <person name="Kamal M."/>
            <person name="Clamp M."/>
            <person name="Chang J.L."/>
            <person name="Kulbokas E.J. III"/>
            <person name="Zody M.C."/>
            <person name="Mauceli E."/>
            <person name="Xie X."/>
            <person name="Breen M."/>
            <person name="Wayne R.K."/>
            <person name="Ostrander E.A."/>
            <person name="Ponting C.P."/>
            <person name="Galibert F."/>
            <person name="Smith D.R."/>
            <person name="deJong P.J."/>
            <person name="Kirkness E.F."/>
            <person name="Alvarez P."/>
            <person name="Biagi T."/>
            <person name="Brockman W."/>
            <person name="Butler J."/>
            <person name="Chin C.-W."/>
            <person name="Cook A."/>
            <person name="Cuff J."/>
            <person name="Daly M.J."/>
            <person name="DeCaprio D."/>
            <person name="Gnerre S."/>
            <person name="Grabherr M."/>
            <person name="Kellis M."/>
            <person name="Kleber M."/>
            <person name="Bardeleben C."/>
            <person name="Goodstadt L."/>
            <person name="Heger A."/>
            <person name="Hitte C."/>
            <person name="Kim L."/>
            <person name="Koepfli K.-P."/>
            <person name="Parker H.G."/>
            <person name="Pollinger J.P."/>
            <person name="Searle S.M.J."/>
            <person name="Sutter N.B."/>
            <person name="Thomas R."/>
            <person name="Webber C."/>
            <person name="Baldwin J."/>
            <person name="Abebe A."/>
            <person name="Abouelleil A."/>
            <person name="Aftuck L."/>
            <person name="Ait-Zahra M."/>
            <person name="Aldredge T."/>
            <person name="Allen N."/>
            <person name="An P."/>
            <person name="Anderson S."/>
            <person name="Antoine C."/>
            <person name="Arachchi H."/>
            <person name="Aslam A."/>
            <person name="Ayotte L."/>
            <person name="Bachantsang P."/>
            <person name="Barry A."/>
            <person name="Bayul T."/>
            <person name="Benamara M."/>
            <person name="Berlin A."/>
            <person name="Bessette D."/>
            <person name="Blitshteyn B."/>
            <person name="Bloom T."/>
            <person name="Blye J."/>
            <person name="Boguslavskiy L."/>
            <person name="Bonnet C."/>
            <person name="Boukhgalter B."/>
            <person name="Brown A."/>
            <person name="Cahill P."/>
            <person name="Calixte N."/>
            <person name="Camarata J."/>
            <person name="Cheshatsang Y."/>
            <person name="Chu J."/>
            <person name="Citroen M."/>
            <person name="Collymore A."/>
            <person name="Cooke P."/>
            <person name="Dawoe T."/>
            <person name="Daza R."/>
            <person name="Decktor K."/>
            <person name="DeGray S."/>
            <person name="Dhargay N."/>
            <person name="Dooley K."/>
            <person name="Dooley K."/>
            <person name="Dorje P."/>
            <person name="Dorjee K."/>
            <person name="Dorris L."/>
            <person name="Duffey N."/>
            <person name="Dupes A."/>
            <person name="Egbiremolen O."/>
            <person name="Elong R."/>
            <person name="Falk J."/>
            <person name="Farina A."/>
            <person name="Faro S."/>
            <person name="Ferguson D."/>
            <person name="Ferreira P."/>
            <person name="Fisher S."/>
            <person name="FitzGerald M."/>
            <person name="Foley K."/>
            <person name="Foley C."/>
            <person name="Franke A."/>
            <person name="Friedrich D."/>
            <person name="Gage D."/>
            <person name="Garber M."/>
            <person name="Gearin G."/>
            <person name="Giannoukos G."/>
            <person name="Goode T."/>
            <person name="Goyette A."/>
            <person name="Graham J."/>
            <person name="Grandbois E."/>
            <person name="Gyaltsen K."/>
            <person name="Hafez N."/>
            <person name="Hagopian D."/>
            <person name="Hagos B."/>
            <person name="Hall J."/>
            <person name="Healy C."/>
            <person name="Hegarty R."/>
            <person name="Honan T."/>
            <person name="Horn A."/>
            <person name="Houde N."/>
            <person name="Hughes L."/>
            <person name="Hunnicutt L."/>
            <person name="Husby M."/>
            <person name="Jester B."/>
            <person name="Jones C."/>
            <person name="Kamat A."/>
            <person name="Kanga B."/>
            <person name="Kells C."/>
            <person name="Khazanovich D."/>
            <person name="Kieu A.C."/>
            <person name="Kisner P."/>
            <person name="Kumar M."/>
            <person name="Lance K."/>
            <person name="Landers T."/>
            <person name="Lara M."/>
            <person name="Lee W."/>
            <person name="Leger J.-P."/>
            <person name="Lennon N."/>
            <person name="Leuper L."/>
            <person name="LeVine S."/>
            <person name="Liu J."/>
            <person name="Liu X."/>
            <person name="Lokyitsang Y."/>
            <person name="Lokyitsang T."/>
            <person name="Lui A."/>
            <person name="Macdonald J."/>
            <person name="Major J."/>
            <person name="Marabella R."/>
            <person name="Maru K."/>
            <person name="Matthews C."/>
            <person name="McDonough S."/>
            <person name="Mehta T."/>
            <person name="Meldrim J."/>
            <person name="Melnikov A."/>
            <person name="Meneus L."/>
            <person name="Mihalev A."/>
            <person name="Mihova T."/>
            <person name="Miller K."/>
            <person name="Mittelman R."/>
            <person name="Mlenga V."/>
            <person name="Mulrain L."/>
            <person name="Munson G."/>
            <person name="Navidi A."/>
            <person name="Naylor J."/>
            <person name="Nguyen T."/>
            <person name="Nguyen N."/>
            <person name="Nguyen C."/>
            <person name="Nguyen T."/>
            <person name="Nicol R."/>
            <person name="Norbu N."/>
            <person name="Norbu C."/>
            <person name="Novod N."/>
            <person name="Nyima T."/>
            <person name="Olandt P."/>
            <person name="O'Neill B."/>
            <person name="O'Neill K."/>
            <person name="Osman S."/>
            <person name="Oyono L."/>
            <person name="Patti C."/>
            <person name="Perrin D."/>
            <person name="Phunkhang P."/>
            <person name="Pierre F."/>
            <person name="Priest M."/>
            <person name="Rachupka A."/>
            <person name="Raghuraman S."/>
            <person name="Rameau R."/>
            <person name="Ray V."/>
            <person name="Raymond C."/>
            <person name="Rege F."/>
            <person name="Rise C."/>
            <person name="Rogers J."/>
            <person name="Rogov P."/>
            <person name="Sahalie J."/>
            <person name="Settipalli S."/>
            <person name="Sharpe T."/>
            <person name="Shea T."/>
            <person name="Sheehan M."/>
            <person name="Sherpa N."/>
            <person name="Shi J."/>
            <person name="Shih D."/>
            <person name="Sloan J."/>
            <person name="Smith C."/>
            <person name="Sparrow T."/>
            <person name="Stalker J."/>
            <person name="Stange-Thomann N."/>
            <person name="Stavropoulos S."/>
            <person name="Stone C."/>
            <person name="Stone S."/>
            <person name="Sykes S."/>
            <person name="Tchuinga P."/>
            <person name="Tenzing P."/>
            <person name="Tesfaye S."/>
            <person name="Thoulutsang D."/>
            <person name="Thoulutsang Y."/>
            <person name="Topham K."/>
            <person name="Topping I."/>
            <person name="Tsamla T."/>
            <person name="Vassiliev H."/>
            <person name="Venkataraman V."/>
            <person name="Vo A."/>
            <person name="Wangchuk T."/>
            <person name="Wangdi T."/>
            <person name="Weiand M."/>
            <person name="Wilkinson J."/>
            <person name="Wilson A."/>
            <person name="Yadav S."/>
            <person name="Yang S."/>
            <person name="Yang X."/>
            <person name="Young G."/>
            <person name="Yu Q."/>
            <person name="Zainoun J."/>
            <person name="Zembek L."/>
            <person name="Zimmer A."/>
            <person name="Lander E.S."/>
        </authorList>
    </citation>
    <scope>NUCLEOTIDE SEQUENCE [LARGE SCALE GENOMIC DNA]</scope>
    <source>
        <strain>Boxer</strain>
    </source>
</reference>
<feature type="chain" id="PRO_0000408338" description="Actin-histidine N-methyltransferase">
    <location>
        <begin position="1"/>
        <end position="588"/>
    </location>
</feature>
<feature type="domain" description="SET" evidence="3">
    <location>
        <begin position="94"/>
        <end position="314"/>
    </location>
</feature>
<feature type="region of interest" description="Disordered" evidence="5">
    <location>
        <begin position="1"/>
        <end position="25"/>
    </location>
</feature>
<feature type="region of interest" description="Disordered" evidence="5">
    <location>
        <begin position="546"/>
        <end position="588"/>
    </location>
</feature>
<feature type="compositionally biased region" description="Polar residues" evidence="5">
    <location>
        <begin position="10"/>
        <end position="25"/>
    </location>
</feature>
<feature type="compositionally biased region" description="Polar residues" evidence="5">
    <location>
        <begin position="548"/>
        <end position="566"/>
    </location>
</feature>
<feature type="compositionally biased region" description="Basic and acidic residues" evidence="5">
    <location>
        <begin position="567"/>
        <end position="579"/>
    </location>
</feature>
<feature type="binding site" evidence="1">
    <location>
        <position position="75"/>
    </location>
    <ligand>
        <name>S-adenosyl-L-methionine</name>
        <dbReference type="ChEBI" id="CHEBI:59789"/>
    </ligand>
</feature>
<feature type="binding site" evidence="1">
    <location>
        <begin position="104"/>
        <end position="106"/>
    </location>
    <ligand>
        <name>S-adenosyl-L-methionine</name>
        <dbReference type="ChEBI" id="CHEBI:59789"/>
    </ligand>
</feature>
<feature type="binding site" evidence="1">
    <location>
        <position position="254"/>
    </location>
    <ligand>
        <name>S-adenosyl-L-methionine</name>
        <dbReference type="ChEBI" id="CHEBI:59789"/>
    </ligand>
</feature>
<feature type="binding site" evidence="1">
    <location>
        <begin position="275"/>
        <end position="279"/>
    </location>
    <ligand>
        <name>S-adenosyl-L-methionine</name>
        <dbReference type="ChEBI" id="CHEBI:59789"/>
    </ligand>
</feature>
<feature type="binding site" evidence="1">
    <location>
        <begin position="325"/>
        <end position="327"/>
    </location>
    <ligand>
        <name>S-adenosyl-L-methionine</name>
        <dbReference type="ChEBI" id="CHEBI:59789"/>
    </ligand>
</feature>
<dbReference type="EC" id="2.1.1.85" evidence="1"/>
<dbReference type="SMR" id="E2RBS6"/>
<dbReference type="FunCoup" id="E2RBS6">
    <property type="interactions" value="1037"/>
</dbReference>
<dbReference type="STRING" id="9615.ENSCAFP00000052396"/>
<dbReference type="PaxDb" id="9612-ENSCAFP00000026294"/>
<dbReference type="eggNOG" id="KOG1337">
    <property type="taxonomic scope" value="Eukaryota"/>
</dbReference>
<dbReference type="InParanoid" id="E2RBS6"/>
<dbReference type="OMA" id="QHIDGIF"/>
<dbReference type="OrthoDB" id="441812at2759"/>
<dbReference type="Proteomes" id="UP000002254">
    <property type="component" value="Unplaced"/>
</dbReference>
<dbReference type="Proteomes" id="UP000694429">
    <property type="component" value="Unplaced"/>
</dbReference>
<dbReference type="Proteomes" id="UP000694542">
    <property type="component" value="Unplaced"/>
</dbReference>
<dbReference type="Proteomes" id="UP000805418">
    <property type="component" value="Unplaced"/>
</dbReference>
<dbReference type="GO" id="GO:0005737">
    <property type="term" value="C:cytoplasm"/>
    <property type="evidence" value="ECO:0000250"/>
    <property type="project" value="UniProtKB"/>
</dbReference>
<dbReference type="GO" id="GO:0005634">
    <property type="term" value="C:nucleus"/>
    <property type="evidence" value="ECO:0007669"/>
    <property type="project" value="UniProtKB-SubCell"/>
</dbReference>
<dbReference type="GO" id="GO:0003779">
    <property type="term" value="F:actin binding"/>
    <property type="evidence" value="ECO:0007669"/>
    <property type="project" value="UniProtKB-KW"/>
</dbReference>
<dbReference type="GO" id="GO:0046975">
    <property type="term" value="F:histone H3K36 methyltransferase activity"/>
    <property type="evidence" value="ECO:0000250"/>
    <property type="project" value="UniProtKB"/>
</dbReference>
<dbReference type="GO" id="GO:0042800">
    <property type="term" value="F:histone H3K4 methyltransferase activity"/>
    <property type="evidence" value="ECO:0000318"/>
    <property type="project" value="GO_Central"/>
</dbReference>
<dbReference type="GO" id="GO:0018064">
    <property type="term" value="F:protein-L-histidine N-tele-methyltransferase activity"/>
    <property type="evidence" value="ECO:0000250"/>
    <property type="project" value="UniProtKB"/>
</dbReference>
<dbReference type="GO" id="GO:0003713">
    <property type="term" value="F:transcription coactivator activity"/>
    <property type="evidence" value="ECO:0000250"/>
    <property type="project" value="UniProtKB"/>
</dbReference>
<dbReference type="GO" id="GO:0030047">
    <property type="term" value="P:actin modification"/>
    <property type="evidence" value="ECO:0000250"/>
    <property type="project" value="UniProtKB"/>
</dbReference>
<dbReference type="GO" id="GO:0018021">
    <property type="term" value="P:peptidyl-histidine methylation"/>
    <property type="evidence" value="ECO:0000250"/>
    <property type="project" value="UniProtKB"/>
</dbReference>
<dbReference type="GO" id="GO:0045893">
    <property type="term" value="P:positive regulation of DNA-templated transcription"/>
    <property type="evidence" value="ECO:0000250"/>
    <property type="project" value="UniProtKB"/>
</dbReference>
<dbReference type="GO" id="GO:0045944">
    <property type="term" value="P:positive regulation of transcription by RNA polymerase II"/>
    <property type="evidence" value="ECO:0000318"/>
    <property type="project" value="GO_Central"/>
</dbReference>
<dbReference type="GO" id="GO:0070472">
    <property type="term" value="P:regulation of uterine smooth muscle contraction"/>
    <property type="evidence" value="ECO:0000250"/>
    <property type="project" value="UniProtKB"/>
</dbReference>
<dbReference type="CDD" id="cd19176">
    <property type="entry name" value="SET_SETD3"/>
    <property type="match status" value="1"/>
</dbReference>
<dbReference type="FunFam" id="3.90.1410.10:FF:000001">
    <property type="entry name" value="histone-lysine N-methyltransferase setd3 isoform X1"/>
    <property type="match status" value="1"/>
</dbReference>
<dbReference type="FunFam" id="3.90.1420.10:FF:000001">
    <property type="entry name" value="histone-lysine N-methyltransferase setd3 isoform X1"/>
    <property type="match status" value="1"/>
</dbReference>
<dbReference type="Gene3D" id="3.90.1420.10">
    <property type="entry name" value="Rubisco LSMT, substrate-binding domain"/>
    <property type="match status" value="1"/>
</dbReference>
<dbReference type="Gene3D" id="3.90.1410.10">
    <property type="entry name" value="set domain protein methyltransferase, domain 1"/>
    <property type="match status" value="1"/>
</dbReference>
<dbReference type="InterPro" id="IPR015353">
    <property type="entry name" value="Rubisco_LSMT_subst-bd"/>
</dbReference>
<dbReference type="InterPro" id="IPR036464">
    <property type="entry name" value="Rubisco_LSMT_subst-bd_sf"/>
</dbReference>
<dbReference type="InterPro" id="IPR001214">
    <property type="entry name" value="SET_dom"/>
</dbReference>
<dbReference type="InterPro" id="IPR046341">
    <property type="entry name" value="SET_dom_sf"/>
</dbReference>
<dbReference type="InterPro" id="IPR025785">
    <property type="entry name" value="SETD3"/>
</dbReference>
<dbReference type="InterPro" id="IPR044428">
    <property type="entry name" value="SETD3_SET"/>
</dbReference>
<dbReference type="InterPro" id="IPR050600">
    <property type="entry name" value="SETD3_SETD6_MTase"/>
</dbReference>
<dbReference type="PANTHER" id="PTHR13271:SF47">
    <property type="entry name" value="ACTIN-HISTIDINE N-METHYLTRANSFERASE"/>
    <property type="match status" value="1"/>
</dbReference>
<dbReference type="PANTHER" id="PTHR13271">
    <property type="entry name" value="UNCHARACTERIZED PUTATIVE METHYLTRANSFERASE"/>
    <property type="match status" value="1"/>
</dbReference>
<dbReference type="Pfam" id="PF09273">
    <property type="entry name" value="Rubis-subs-bind"/>
    <property type="match status" value="1"/>
</dbReference>
<dbReference type="Pfam" id="PF00856">
    <property type="entry name" value="SET"/>
    <property type="match status" value="1"/>
</dbReference>
<dbReference type="SUPFAM" id="SSF81822">
    <property type="entry name" value="RuBisCo LSMT C-terminal, substrate-binding domain"/>
    <property type="match status" value="1"/>
</dbReference>
<dbReference type="SUPFAM" id="SSF82199">
    <property type="entry name" value="SET domain"/>
    <property type="match status" value="1"/>
</dbReference>
<dbReference type="PROSITE" id="PS51565">
    <property type="entry name" value="SAM_MT85_SETD3"/>
    <property type="match status" value="1"/>
</dbReference>
<dbReference type="PROSITE" id="PS50280">
    <property type="entry name" value="SET"/>
    <property type="match status" value="1"/>
</dbReference>
<comment type="function">
    <text evidence="1">Protein-histidine N-methyltransferase that specifically mediates 3-methylhistidine (tele-methylhistidine) methylation of actin at 'His-73'. Histidine methylation of actin is required for smooth muscle contraction of the laboring uterus during delivery. Does not have protein-lysine N-methyltransferase activity and probably only catalyzes histidine methylation of actin.</text>
</comment>
<comment type="catalytic activity">
    <reaction evidence="1">
        <text>L-histidyl-[protein] + S-adenosyl-L-methionine = N(tele)-methyl-L-histidyl-[protein] + S-adenosyl-L-homocysteine + H(+)</text>
        <dbReference type="Rhea" id="RHEA:19369"/>
        <dbReference type="Rhea" id="RHEA-COMP:9745"/>
        <dbReference type="Rhea" id="RHEA-COMP:11600"/>
        <dbReference type="ChEBI" id="CHEBI:15378"/>
        <dbReference type="ChEBI" id="CHEBI:16367"/>
        <dbReference type="ChEBI" id="CHEBI:29979"/>
        <dbReference type="ChEBI" id="CHEBI:57856"/>
        <dbReference type="ChEBI" id="CHEBI:59789"/>
        <dbReference type="EC" id="2.1.1.85"/>
    </reaction>
</comment>
<comment type="subunit">
    <text evidence="2">Interacts with MYOD1.</text>
</comment>
<comment type="subcellular location">
    <subcellularLocation>
        <location evidence="1">Cytoplasm</location>
    </subcellularLocation>
    <subcellularLocation>
        <location evidence="1">Nucleus</location>
    </subcellularLocation>
    <text evidence="1">Localizes mainly in the cytoplasm.</text>
</comment>
<comment type="domain">
    <text evidence="1">The SET domain specifically recognizes and binds actin, suggesting that it does not accommodate substrates diverging from actin.</text>
</comment>
<comment type="PTM">
    <text evidence="1">Phosphorylated by GSK3B, which is required for recognition by the SCF(FBXW7) complex and subsequent degradation.</text>
</comment>
<comment type="PTM">
    <text evidence="1">Ubiquitinated by the SCF(FBXW7) complex following phosphorylation by GSK3B, leading to its degradation by the proteasome.</text>
</comment>
<comment type="similarity">
    <text evidence="4">Belongs to the class V-like SAM-binding methyltransferase superfamily. SETD3 actin-histidine methyltransferase family.</text>
</comment>
<protein>
    <recommendedName>
        <fullName evidence="1">Actin-histidine N-methyltransferase</fullName>
        <ecNumber evidence="1">2.1.1.85</ecNumber>
    </recommendedName>
    <alternativeName>
        <fullName evidence="6">Protein-L-histidine N-tele-methyltransferase</fullName>
    </alternativeName>
    <alternativeName>
        <fullName evidence="6">SET domain-containing protein 3</fullName>
    </alternativeName>
</protein>
<organism>
    <name type="scientific">Canis lupus familiaris</name>
    <name type="common">Dog</name>
    <name type="synonym">Canis familiaris</name>
    <dbReference type="NCBI Taxonomy" id="9615"/>
    <lineage>
        <taxon>Eukaryota</taxon>
        <taxon>Metazoa</taxon>
        <taxon>Chordata</taxon>
        <taxon>Craniata</taxon>
        <taxon>Vertebrata</taxon>
        <taxon>Euteleostomi</taxon>
        <taxon>Mammalia</taxon>
        <taxon>Eutheria</taxon>
        <taxon>Laurasiatheria</taxon>
        <taxon>Carnivora</taxon>
        <taxon>Caniformia</taxon>
        <taxon>Canidae</taxon>
        <taxon>Canis</taxon>
    </lineage>
</organism>
<accession>E2RBS6</accession>
<gene>
    <name evidence="1" type="primary">SETD3</name>
</gene>
<proteinExistence type="inferred from homology"/>
<name>SETD3_CANLF</name>
<sequence>MGKKSRVKTQKSGTGATASVSPKETLNLTSELLQKCSSPAPGPGKEWEEYVQIRSLVEKIRKKQKGLSVTFDGKREDYFPDLMKWASENGASVEGFEMVNFKEEGFGLRATRDIKAEELFLWVPRKLLMTVESAKNSVLGPLYSQDRILQAMGNITLAFHLLCERADPNSFWQPYIQTLPSEYDTPLYFEEDEVRDLQSTQAIHDVFSQYKNTARQYAYFYKVIQTHPHANKLPLKDAFTYEDYRWAVSSVMTRQNQIPTEDGSRVTLALIPLWDMCNHTNGLITTGYNLEDDRCECVALRDFRAGEQIYIFYGTRSNAEFVIHSGFFFDNNSHDRVKIKLGVSKSDRLYAMKAEVLARAGIPTSSVFALHYTDPPVSAQLLAFLRVFCMTEEELKEHLLGDNALDRIFTLGNSEYPVSWDNEVRLWTFLEDRASLLLKTYKTTIEEDKSFLRNHDLSVRATMAIKLRLGEKEILEKAVKSAAANREHYRKQMQAGAPLPRCEESGTAGARLPLALRDLEAEASVQEALSLTEAVGRAKAVENGLVNGENSIPNGTRSGKENFNQEGSERATEGTKESSSDSTAGARE</sequence>